<dbReference type="EC" id="3.6.4.13"/>
<dbReference type="EMBL" id="AL353013">
    <property type="protein sequence ID" value="CAB88265.1"/>
    <property type="status" value="ALT_SEQ"/>
    <property type="molecule type" value="Genomic_DNA"/>
</dbReference>
<dbReference type="EMBL" id="CP002688">
    <property type="protein sequence ID" value="AED91841.1"/>
    <property type="molecule type" value="Genomic_DNA"/>
</dbReference>
<dbReference type="PIR" id="T49915">
    <property type="entry name" value="T49915"/>
</dbReference>
<dbReference type="RefSeq" id="NP_196805.2">
    <property type="nucleotide sequence ID" value="NM_121304.6"/>
</dbReference>
<dbReference type="SMR" id="F4K2E9"/>
<dbReference type="FunCoup" id="F4K2E9">
    <property type="interactions" value="4102"/>
</dbReference>
<dbReference type="STRING" id="3702.F4K2E9"/>
<dbReference type="iPTMnet" id="F4K2E9"/>
<dbReference type="PaxDb" id="3702-AT5G13010.1"/>
<dbReference type="ProMEX" id="F4K2E9"/>
<dbReference type="ProteomicsDB" id="226377"/>
<dbReference type="EnsemblPlants" id="AT5G13010.1">
    <property type="protein sequence ID" value="AT5G13010.1"/>
    <property type="gene ID" value="AT5G13010"/>
</dbReference>
<dbReference type="GeneID" id="831141"/>
<dbReference type="Gramene" id="AT5G13010.1">
    <property type="protein sequence ID" value="AT5G13010.1"/>
    <property type="gene ID" value="AT5G13010"/>
</dbReference>
<dbReference type="KEGG" id="ath:AT5G13010"/>
<dbReference type="Araport" id="AT5G13010"/>
<dbReference type="TAIR" id="AT5G13010">
    <property type="gene designation" value="EMB3011"/>
</dbReference>
<dbReference type="eggNOG" id="KOG0924">
    <property type="taxonomic scope" value="Eukaryota"/>
</dbReference>
<dbReference type="HOGENOM" id="CLU_001832_6_5_1"/>
<dbReference type="InParanoid" id="F4K2E9"/>
<dbReference type="OMA" id="VDVMFHR"/>
<dbReference type="PRO" id="PR:F4K2E9"/>
<dbReference type="Proteomes" id="UP000006548">
    <property type="component" value="Chromosome 5"/>
</dbReference>
<dbReference type="ExpressionAtlas" id="F4K2E9">
    <property type="expression patterns" value="baseline and differential"/>
</dbReference>
<dbReference type="GO" id="GO:0005634">
    <property type="term" value="C:nucleus"/>
    <property type="evidence" value="ECO:0000314"/>
    <property type="project" value="UniProtKB"/>
</dbReference>
<dbReference type="GO" id="GO:0005681">
    <property type="term" value="C:spliceosomal complex"/>
    <property type="evidence" value="ECO:0007669"/>
    <property type="project" value="UniProtKB-KW"/>
</dbReference>
<dbReference type="GO" id="GO:0005524">
    <property type="term" value="F:ATP binding"/>
    <property type="evidence" value="ECO:0007669"/>
    <property type="project" value="UniProtKB-KW"/>
</dbReference>
<dbReference type="GO" id="GO:0016887">
    <property type="term" value="F:ATP hydrolysis activity"/>
    <property type="evidence" value="ECO:0007669"/>
    <property type="project" value="RHEA"/>
</dbReference>
<dbReference type="GO" id="GO:0003676">
    <property type="term" value="F:nucleic acid binding"/>
    <property type="evidence" value="ECO:0007669"/>
    <property type="project" value="InterPro"/>
</dbReference>
<dbReference type="GO" id="GO:0003724">
    <property type="term" value="F:RNA helicase activity"/>
    <property type="evidence" value="ECO:0007669"/>
    <property type="project" value="UniProtKB-EC"/>
</dbReference>
<dbReference type="GO" id="GO:0050832">
    <property type="term" value="P:defense response to fungus"/>
    <property type="evidence" value="ECO:0000315"/>
    <property type="project" value="TAIR"/>
</dbReference>
<dbReference type="GO" id="GO:0009793">
    <property type="term" value="P:embryo development ending in seed dormancy"/>
    <property type="evidence" value="ECO:0000315"/>
    <property type="project" value="TAIR"/>
</dbReference>
<dbReference type="GO" id="GO:0010467">
    <property type="term" value="P:gene expression"/>
    <property type="evidence" value="ECO:0000315"/>
    <property type="project" value="UniProtKB"/>
</dbReference>
<dbReference type="GO" id="GO:0045087">
    <property type="term" value="P:innate immune response"/>
    <property type="evidence" value="ECO:0007669"/>
    <property type="project" value="UniProtKB-KW"/>
</dbReference>
<dbReference type="GO" id="GO:0000398">
    <property type="term" value="P:mRNA splicing, via spliceosome"/>
    <property type="evidence" value="ECO:0000315"/>
    <property type="project" value="UniProtKB"/>
</dbReference>
<dbReference type="GO" id="GO:0031334">
    <property type="term" value="P:positive regulation of protein-containing complex assembly"/>
    <property type="evidence" value="ECO:0000316"/>
    <property type="project" value="TAIR"/>
</dbReference>
<dbReference type="GO" id="GO:0033120">
    <property type="term" value="P:positive regulation of RNA splicing"/>
    <property type="evidence" value="ECO:0000315"/>
    <property type="project" value="UniProtKB"/>
</dbReference>
<dbReference type="GO" id="GO:0031053">
    <property type="term" value="P:primary miRNA processing"/>
    <property type="evidence" value="ECO:0000315"/>
    <property type="project" value="TAIR"/>
</dbReference>
<dbReference type="GO" id="GO:0035194">
    <property type="term" value="P:regulatory ncRNA-mediated post-transcriptional gene silencing"/>
    <property type="evidence" value="ECO:0000315"/>
    <property type="project" value="UniProtKB"/>
</dbReference>
<dbReference type="GO" id="GO:0008380">
    <property type="term" value="P:RNA splicing"/>
    <property type="evidence" value="ECO:0000315"/>
    <property type="project" value="TAIR"/>
</dbReference>
<dbReference type="GO" id="GO:0048364">
    <property type="term" value="P:root development"/>
    <property type="evidence" value="ECO:0000315"/>
    <property type="project" value="UniProtKB"/>
</dbReference>
<dbReference type="GO" id="GO:0048767">
    <property type="term" value="P:root hair elongation"/>
    <property type="evidence" value="ECO:0000316"/>
    <property type="project" value="TAIR"/>
</dbReference>
<dbReference type="GO" id="GO:0010051">
    <property type="term" value="P:xylem and phloem pattern formation"/>
    <property type="evidence" value="ECO:0000315"/>
    <property type="project" value="TAIR"/>
</dbReference>
<dbReference type="CDD" id="cd17983">
    <property type="entry name" value="DEXHc_DHX38"/>
    <property type="match status" value="1"/>
</dbReference>
<dbReference type="CDD" id="cd18791">
    <property type="entry name" value="SF2_C_RHA"/>
    <property type="match status" value="1"/>
</dbReference>
<dbReference type="FunFam" id="3.40.50.300:FF:000007">
    <property type="entry name" value="Pre-mRNA-splicing factor ATP-dependent RNA helicase"/>
    <property type="match status" value="1"/>
</dbReference>
<dbReference type="FunFam" id="3.40.50.300:FF:000615">
    <property type="entry name" value="pre-mRNA-splicing factor ATP-dependent RNA helicase DEAH7"/>
    <property type="match status" value="1"/>
</dbReference>
<dbReference type="FunFam" id="1.20.120.1080:FF:000018">
    <property type="entry name" value="Pre-mRNA-splicing factor ATP-dependent RNA helicase prp16"/>
    <property type="match status" value="1"/>
</dbReference>
<dbReference type="Gene3D" id="1.20.120.1080">
    <property type="match status" value="1"/>
</dbReference>
<dbReference type="Gene3D" id="3.40.50.300">
    <property type="entry name" value="P-loop containing nucleotide triphosphate hydrolases"/>
    <property type="match status" value="2"/>
</dbReference>
<dbReference type="InterPro" id="IPR011709">
    <property type="entry name" value="DEAD-box_helicase_OB_fold"/>
</dbReference>
<dbReference type="InterPro" id="IPR011545">
    <property type="entry name" value="DEAD/DEAH_box_helicase_dom"/>
</dbReference>
<dbReference type="InterPro" id="IPR048333">
    <property type="entry name" value="HA2_WH"/>
</dbReference>
<dbReference type="InterPro" id="IPR007502">
    <property type="entry name" value="Helicase-assoc_dom"/>
</dbReference>
<dbReference type="InterPro" id="IPR014001">
    <property type="entry name" value="Helicase_ATP-bd"/>
</dbReference>
<dbReference type="InterPro" id="IPR001650">
    <property type="entry name" value="Helicase_C-like"/>
</dbReference>
<dbReference type="InterPro" id="IPR027417">
    <property type="entry name" value="P-loop_NTPase"/>
</dbReference>
<dbReference type="PANTHER" id="PTHR18934">
    <property type="entry name" value="ATP-DEPENDENT RNA HELICASE"/>
    <property type="match status" value="1"/>
</dbReference>
<dbReference type="PANTHER" id="PTHR18934:SF91">
    <property type="entry name" value="PRE-MRNA-SPLICING FACTOR ATP-DEPENDENT RNA HELICASE PRP16"/>
    <property type="match status" value="1"/>
</dbReference>
<dbReference type="Pfam" id="PF00270">
    <property type="entry name" value="DEAD"/>
    <property type="match status" value="1"/>
</dbReference>
<dbReference type="Pfam" id="PF21010">
    <property type="entry name" value="HA2_C"/>
    <property type="match status" value="1"/>
</dbReference>
<dbReference type="Pfam" id="PF04408">
    <property type="entry name" value="HA2_N"/>
    <property type="match status" value="1"/>
</dbReference>
<dbReference type="Pfam" id="PF00271">
    <property type="entry name" value="Helicase_C"/>
    <property type="match status" value="1"/>
</dbReference>
<dbReference type="Pfam" id="PF07717">
    <property type="entry name" value="OB_NTP_bind"/>
    <property type="match status" value="1"/>
</dbReference>
<dbReference type="SMART" id="SM00487">
    <property type="entry name" value="DEXDc"/>
    <property type="match status" value="1"/>
</dbReference>
<dbReference type="SMART" id="SM00847">
    <property type="entry name" value="HA2"/>
    <property type="match status" value="1"/>
</dbReference>
<dbReference type="SMART" id="SM00490">
    <property type="entry name" value="HELICc"/>
    <property type="match status" value="1"/>
</dbReference>
<dbReference type="SUPFAM" id="SSF52540">
    <property type="entry name" value="P-loop containing nucleoside triphosphate hydrolases"/>
    <property type="match status" value="1"/>
</dbReference>
<dbReference type="PROSITE" id="PS51192">
    <property type="entry name" value="HELICASE_ATP_BIND_1"/>
    <property type="match status" value="1"/>
</dbReference>
<dbReference type="PROSITE" id="PS51194">
    <property type="entry name" value="HELICASE_CTER"/>
    <property type="match status" value="1"/>
</dbReference>
<proteinExistence type="evidence at protein level"/>
<feature type="chain" id="PRO_0000434941" description="Pre-mRNA-splicing factor ATP-dependent RNA helicase DEAH7">
    <location>
        <begin position="1"/>
        <end position="1255"/>
    </location>
</feature>
<feature type="domain" description="Helicase ATP-binding" evidence="2">
    <location>
        <begin position="568"/>
        <end position="731"/>
    </location>
</feature>
<feature type="domain" description="Helicase C-terminal" evidence="3">
    <location>
        <begin position="753"/>
        <end position="933"/>
    </location>
</feature>
<feature type="region of interest" description="Disordered" evidence="4">
    <location>
        <begin position="1"/>
        <end position="316"/>
    </location>
</feature>
<feature type="region of interest" description="Disordered" evidence="4">
    <location>
        <begin position="1190"/>
        <end position="1255"/>
    </location>
</feature>
<feature type="short sequence motif" description="Nuclear localization signal" evidence="9">
    <location>
        <begin position="144"/>
        <end position="153"/>
    </location>
</feature>
<feature type="short sequence motif" description="Nuclear localization signal" evidence="9">
    <location>
        <begin position="172"/>
        <end position="191"/>
    </location>
</feature>
<feature type="short sequence motif" description="DEAH box" evidence="2">
    <location>
        <begin position="678"/>
        <end position="681"/>
    </location>
</feature>
<feature type="compositionally biased region" description="Basic and acidic residues" evidence="4">
    <location>
        <begin position="13"/>
        <end position="60"/>
    </location>
</feature>
<feature type="compositionally biased region" description="Polar residues" evidence="4">
    <location>
        <begin position="109"/>
        <end position="137"/>
    </location>
</feature>
<feature type="compositionally biased region" description="Basic and acidic residues" evidence="4">
    <location>
        <begin position="144"/>
        <end position="219"/>
    </location>
</feature>
<feature type="compositionally biased region" description="Low complexity" evidence="4">
    <location>
        <begin position="220"/>
        <end position="240"/>
    </location>
</feature>
<feature type="compositionally biased region" description="Low complexity" evidence="4">
    <location>
        <begin position="271"/>
        <end position="290"/>
    </location>
</feature>
<feature type="compositionally biased region" description="Basic and acidic residues" evidence="4">
    <location>
        <begin position="297"/>
        <end position="316"/>
    </location>
</feature>
<feature type="compositionally biased region" description="Basic and acidic residues" evidence="4">
    <location>
        <begin position="1190"/>
        <end position="1224"/>
    </location>
</feature>
<feature type="binding site" evidence="2">
    <location>
        <begin position="581"/>
        <end position="588"/>
    </location>
    <ligand>
        <name>ATP</name>
        <dbReference type="ChEBI" id="CHEBI:30616"/>
    </ligand>
</feature>
<feature type="mutagenesis site" description="In cuv-1; altered venation pattern." evidence="5">
    <original>G</original>
    <variation>R</variation>
    <location>
        <position position="974"/>
    </location>
</feature>
<evidence type="ECO:0000250" key="1">
    <source>
        <dbReference type="UniProtKB" id="P15938"/>
    </source>
</evidence>
<evidence type="ECO:0000255" key="2">
    <source>
        <dbReference type="PROSITE-ProRule" id="PRU00541"/>
    </source>
</evidence>
<evidence type="ECO:0000255" key="3">
    <source>
        <dbReference type="PROSITE-ProRule" id="PRU00542"/>
    </source>
</evidence>
<evidence type="ECO:0000256" key="4">
    <source>
        <dbReference type="SAM" id="MobiDB-lite"/>
    </source>
</evidence>
<evidence type="ECO:0000269" key="5">
    <source>
    </source>
</evidence>
<evidence type="ECO:0000269" key="6">
    <source>
    </source>
</evidence>
<evidence type="ECO:0000269" key="7">
    <source>
    </source>
</evidence>
<evidence type="ECO:0000303" key="8">
    <source>
    </source>
</evidence>
<evidence type="ECO:0000303" key="9">
    <source>
    </source>
</evidence>
<evidence type="ECO:0000303" key="10">
    <source>
    </source>
</evidence>
<evidence type="ECO:0000303" key="11">
    <source>
    </source>
</evidence>
<evidence type="ECO:0000305" key="12"/>
<evidence type="ECO:0000312" key="13">
    <source>
        <dbReference type="Araport" id="AT5G13010"/>
    </source>
</evidence>
<evidence type="ECO:0000312" key="14">
    <source>
        <dbReference type="EMBL" id="CAB88265.1"/>
    </source>
</evidence>
<keyword id="KW-0067">ATP-binding</keyword>
<keyword id="KW-0347">Helicase</keyword>
<keyword id="KW-0378">Hydrolase</keyword>
<keyword id="KW-0391">Immunity</keyword>
<keyword id="KW-0399">Innate immunity</keyword>
<keyword id="KW-0507">mRNA processing</keyword>
<keyword id="KW-0508">mRNA splicing</keyword>
<keyword id="KW-0547">Nucleotide-binding</keyword>
<keyword id="KW-0539">Nucleus</keyword>
<keyword id="KW-1185">Reference proteome</keyword>
<keyword id="KW-0943">RNA-mediated gene silencing</keyword>
<keyword id="KW-0747">Spliceosome</keyword>
<keyword id="KW-0804">Transcription</keyword>
<keyword id="KW-0805">Transcription regulation</keyword>
<name>PRP16_ARATH</name>
<protein>
    <recommendedName>
        <fullName evidence="12">Pre-mRNA-splicing factor ATP-dependent RNA helicase DEAH7</fullName>
        <ecNumber>3.6.4.13</ecNumber>
    </recommendedName>
    <alternativeName>
        <fullName evidence="8 11">DEAH RNA helicase homolog PRP16</fullName>
    </alternativeName>
    <alternativeName>
        <fullName evidence="9">Protein CLUMSY VEIN</fullName>
    </alternativeName>
    <alternativeName>
        <fullName evidence="12">Protein EMBRYO DEFECTIVE 3011</fullName>
    </alternativeName>
    <alternativeName>
        <fullName evidence="10">Protein PSR1-INTERACTING PROTEIN 1</fullName>
    </alternativeName>
</protein>
<gene>
    <name evidence="9" type="primary">CUV</name>
    <name evidence="12" type="synonym">EMB3011</name>
    <name evidence="10" type="synonym">PINP1</name>
    <name evidence="13" type="ordered locus">At5g13010</name>
    <name evidence="14" type="ORF">T24H18_180</name>
</gene>
<reference key="1">
    <citation type="journal article" date="2000" name="Nature">
        <title>Sequence and analysis of chromosome 5 of the plant Arabidopsis thaliana.</title>
        <authorList>
            <person name="Tabata S."/>
            <person name="Kaneko T."/>
            <person name="Nakamura Y."/>
            <person name="Kotani H."/>
            <person name="Kato T."/>
            <person name="Asamizu E."/>
            <person name="Miyajima N."/>
            <person name="Sasamoto S."/>
            <person name="Kimura T."/>
            <person name="Hosouchi T."/>
            <person name="Kawashima K."/>
            <person name="Kohara M."/>
            <person name="Matsumoto M."/>
            <person name="Matsuno A."/>
            <person name="Muraki A."/>
            <person name="Nakayama S."/>
            <person name="Nakazaki N."/>
            <person name="Naruo K."/>
            <person name="Okumura S."/>
            <person name="Shinpo S."/>
            <person name="Takeuchi C."/>
            <person name="Wada T."/>
            <person name="Watanabe A."/>
            <person name="Yamada M."/>
            <person name="Yasuda M."/>
            <person name="Sato S."/>
            <person name="de la Bastide M."/>
            <person name="Huang E."/>
            <person name="Spiegel L."/>
            <person name="Gnoj L."/>
            <person name="O'Shaughnessy A."/>
            <person name="Preston R."/>
            <person name="Habermann K."/>
            <person name="Murray J."/>
            <person name="Johnson D."/>
            <person name="Rohlfing T."/>
            <person name="Nelson J."/>
            <person name="Stoneking T."/>
            <person name="Pepin K."/>
            <person name="Spieth J."/>
            <person name="Sekhon M."/>
            <person name="Armstrong J."/>
            <person name="Becker M."/>
            <person name="Belter E."/>
            <person name="Cordum H."/>
            <person name="Cordes M."/>
            <person name="Courtney L."/>
            <person name="Courtney W."/>
            <person name="Dante M."/>
            <person name="Du H."/>
            <person name="Edwards J."/>
            <person name="Fryman J."/>
            <person name="Haakensen B."/>
            <person name="Lamar E."/>
            <person name="Latreille P."/>
            <person name="Leonard S."/>
            <person name="Meyer R."/>
            <person name="Mulvaney E."/>
            <person name="Ozersky P."/>
            <person name="Riley A."/>
            <person name="Strowmatt C."/>
            <person name="Wagner-McPherson C."/>
            <person name="Wollam A."/>
            <person name="Yoakum M."/>
            <person name="Bell M."/>
            <person name="Dedhia N."/>
            <person name="Parnell L."/>
            <person name="Shah R."/>
            <person name="Rodriguez M."/>
            <person name="Hoon See L."/>
            <person name="Vil D."/>
            <person name="Baker J."/>
            <person name="Kirchoff K."/>
            <person name="Toth K."/>
            <person name="King L."/>
            <person name="Bahret A."/>
            <person name="Miller B."/>
            <person name="Marra M.A."/>
            <person name="Martienssen R."/>
            <person name="McCombie W.R."/>
            <person name="Wilson R.K."/>
            <person name="Murphy G."/>
            <person name="Bancroft I."/>
            <person name="Volckaert G."/>
            <person name="Wambutt R."/>
            <person name="Duesterhoeft A."/>
            <person name="Stiekema W."/>
            <person name="Pohl T."/>
            <person name="Entian K.-D."/>
            <person name="Terryn N."/>
            <person name="Hartley N."/>
            <person name="Bent E."/>
            <person name="Johnson S."/>
            <person name="Langham S.-A."/>
            <person name="McCullagh B."/>
            <person name="Robben J."/>
            <person name="Grymonprez B."/>
            <person name="Zimmermann W."/>
            <person name="Ramsperger U."/>
            <person name="Wedler H."/>
            <person name="Balke K."/>
            <person name="Wedler E."/>
            <person name="Peters S."/>
            <person name="van Staveren M."/>
            <person name="Dirkse W."/>
            <person name="Mooijman P."/>
            <person name="Klein Lankhorst R."/>
            <person name="Weitzenegger T."/>
            <person name="Bothe G."/>
            <person name="Rose M."/>
            <person name="Hauf J."/>
            <person name="Berneiser S."/>
            <person name="Hempel S."/>
            <person name="Feldpausch M."/>
            <person name="Lamberth S."/>
            <person name="Villarroel R."/>
            <person name="Gielen J."/>
            <person name="Ardiles W."/>
            <person name="Bents O."/>
            <person name="Lemcke K."/>
            <person name="Kolesov G."/>
            <person name="Mayer K.F.X."/>
            <person name="Rudd S."/>
            <person name="Schoof H."/>
            <person name="Schueller C."/>
            <person name="Zaccaria P."/>
            <person name="Mewes H.-W."/>
            <person name="Bevan M."/>
            <person name="Fransz P.F."/>
        </authorList>
    </citation>
    <scope>NUCLEOTIDE SEQUENCE [LARGE SCALE GENOMIC DNA]</scope>
    <source>
        <strain>cv. Columbia</strain>
    </source>
</reference>
<reference key="2">
    <citation type="journal article" date="2017" name="Plant J.">
        <title>Araport11: a complete reannotation of the Arabidopsis thaliana reference genome.</title>
        <authorList>
            <person name="Cheng C.Y."/>
            <person name="Krishnakumar V."/>
            <person name="Chan A.P."/>
            <person name="Thibaud-Nissen F."/>
            <person name="Schobel S."/>
            <person name="Town C.D."/>
        </authorList>
    </citation>
    <scope>GENOME REANNOTATION</scope>
    <source>
        <strain>cv. Columbia</strain>
    </source>
</reference>
<reference key="3">
    <citation type="journal article" date="2006" name="Proc. Natl. Acad. Sci. U.S.A.">
        <title>Defective RNA processing enhances RNA silencing and influences flowering of Arabidopsis.</title>
        <authorList>
            <person name="Herr A.J."/>
            <person name="Molnar A."/>
            <person name="Jones A."/>
            <person name="Baulcombe D.C."/>
        </authorList>
    </citation>
    <scope>IDENTIFICATION</scope>
</reference>
<reference key="4">
    <citation type="journal article" date="2013" name="PLoS ONE">
        <title>Genome-wide comparative in silico analysis of the RNA helicase gene family in Zea mays and Glycine max: a comparison with Arabidopsis and Oryza sativa.</title>
        <authorList>
            <person name="Xu R."/>
            <person name="Zhang S."/>
            <person name="Huang J."/>
            <person name="Zheng C."/>
        </authorList>
    </citation>
    <scope>GENE FAMILY</scope>
</reference>
<reference key="5">
    <citation type="journal article" date="2015" name="Plant J.">
        <title>CLUMSY VEIN, the Arabidopsis DEAH-box Prp16 ortholog, is required for auxin-mediated development.</title>
        <authorList>
            <person name="Tsugeki R."/>
            <person name="Tanaka-Sato N."/>
            <person name="Maruyama N."/>
            <person name="Terada S."/>
            <person name="Kojima M."/>
            <person name="Sakakibara H."/>
            <person name="Okada K."/>
        </authorList>
    </citation>
    <scope>FUNCTION</scope>
    <scope>DISRUPTION PHENOTYPE</scope>
    <scope>MUTAGENESIS OF GLY-974</scope>
    <scope>MOTIFS</scope>
    <scope>SUBCELLULAR LOCATION</scope>
    <scope>DEVELOPMENTAL STAGE</scope>
</reference>
<reference key="6">
    <citation type="journal article" date="2015" name="Plant Signal. Behav.">
        <title>The Arabidopsis ortholog of the DEAH-box ATPase Prp16 influences auxin-mediated development.</title>
        <authorList>
            <person name="Tsugeki R."/>
            <person name="Terada S."/>
        </authorList>
    </citation>
    <scope>FUNCTION</scope>
</reference>
<reference key="7">
    <citation type="journal article" date="2015" name="Proc. Natl. Acad. Sci. U.S.A.">
        <title>Phytophthora effector targets a novel component of small RNA pathway in plants to promote infection.</title>
        <authorList>
            <person name="Qiao Y."/>
            <person name="Shi J."/>
            <person name="Zhai Y."/>
            <person name="Hou Y."/>
            <person name="Ma W."/>
        </authorList>
    </citation>
    <scope>INTERACTION WITH PSR1</scope>
    <scope>FUNCTION</scope>
    <scope>SUBCELLULAR LOCATION</scope>
</reference>
<comment type="function">
    <text evidence="5 6 7">Involved in pre-mRNA splicing by mediating structural transitions of the spliceosome during the catalytic step. Facilitates expression of genes involved in auxin-mediated development including male-gametophyte transmission, apical-basal patterning of embryonic and gynoecium development, stamen development, phyllotactic flower positioning, and vascular development (PubMed:25384462). Also involved in root-meristem maintenance and planar polarity of root-hair positioning (PubMed:26237376). Acts as a component of RNA silencing that regulates distinct classes of endogenous small RNAs. Functions as a positive regulator of plant immunity (PubMed:25902521).</text>
</comment>
<comment type="catalytic activity">
    <reaction>
        <text>ATP + H2O = ADP + phosphate + H(+)</text>
        <dbReference type="Rhea" id="RHEA:13065"/>
        <dbReference type="ChEBI" id="CHEBI:15377"/>
        <dbReference type="ChEBI" id="CHEBI:15378"/>
        <dbReference type="ChEBI" id="CHEBI:30616"/>
        <dbReference type="ChEBI" id="CHEBI:43474"/>
        <dbReference type="ChEBI" id="CHEBI:456216"/>
        <dbReference type="EC" id="3.6.4.13"/>
    </reaction>
</comment>
<comment type="subunit">
    <text evidence="6">Interacts with the Phytophthora PSR1 protein.</text>
</comment>
<comment type="subcellular location">
    <subcellularLocation>
        <location evidence="5 6">Nucleus</location>
    </subcellularLocation>
    <text evidence="1">Binds to the spliceosome.</text>
</comment>
<comment type="developmental stage">
    <text evidence="5">Preferentially expressed in developing organs.</text>
</comment>
<comment type="disruption phenotype">
    <text evidence="5">Narrow rosette leaves with altered venation pattern.</text>
</comment>
<comment type="miscellaneous">
    <text evidence="6">Silencing of PINP1 renders defects in small RNA accumulation, developmental defects and hypersensitivity to Phytophthora infection.</text>
</comment>
<comment type="similarity">
    <text evidence="12">Belongs to the DEAD box helicase family. DEAH subfamily. PRP16 sub-subfamily.</text>
</comment>
<comment type="sequence caution" evidence="12">
    <conflict type="erroneous gene model prediction">
        <sequence resource="EMBL-CDS" id="CAB88265"/>
    </conflict>
</comment>
<comment type="online information" name="Seed defective Arabidopsis mutants">
    <link uri="http://seedgenes.org/MutantList"/>
</comment>
<sequence length="1255" mass="141860">MGVDPFKTTETLEADKETNGGVPVKDKLTFKAPERKSRLGLDARAIEKKDNAKTEGEFKVPKKSAISVTSSLDEEDKSDVSGLDFGTENTRPVHSSRRYREKSSRSQSAQESTVTTENAGTSDISITPRTLSCTSSYERGGSNRHREEHRRDRSETPRSRQRNTYDEMDHYRRRESYRQSDRDYHGEKRRRYNSDWRTPGRSDWDDGQDEWERSPHGDRGSSYSRRPQPSPSPMLAAASPDARLASPWLDTPRSTMSSASPWDMGAPSPIPIRASGSSIRSSSSRYGGRSNQLAYSREGDLTNEGHSDEDRSQGAEEFKHEITETMRVEMEYQSDRAWYDTDEGNSLFDADSASFFLGDDASLQKKETELAKRLVRRDGSKMSLAQSKKYSQLNADNAQWEDRQLLRSGAVRGTEVQTEFDSEEERKAILLVHDTKPPFLDGRVVYTKQAEPVMPVKDPTSDMAIISRKGSGLVKEIREKQSANKSRQRFWELAGSNLGNILGIEKSAEQIDADTAVVGDDGEVDFKGEAKFAQHMKKGEAVSEFAMSKTMAEQRQYLPIFSVRDELLQVIRENQVIVVVGETGSGKTTQLTQYLHEDGYTINGIVGCTQPRRVAAMSVAKRVSEEMETELGDKIGYAIRFEDVTGPNTVIKYMTDGVLLRETLKDSDLDKYRVVVMDEAHERSLNTDVLFGILKKVVARRRDFKLIVTSATLNAQKFSNFFGSVPIFNIPGRTFPVNILYSKTPCEDYVEAAVKQAMTIHITSPPGDILIFMTGQDEIEAACFSLKERMEQLVSSSSREITNLLILPIYSQLPADLQAKIFQKPEDGARKCIVATNIAETSLTVDGIYYVIDTGYGKMKVFNPRMGMDALQVFPISRAASDQRAGRAGRTGPGTCYRLYTESAYLNEMLPSPVPEIQRTNLGNVVLLLKSLKIDNLLDFDFMDPPPQENILNSMYQLWVLGALNNVGGLTDLGWKMVEFPLDPPLAKMLLMGERLDCIDEVLTIVSMLSVPSVFFRPKERAEESDAAREKFFVPESDHLTLLNVYQQWKEHDYRGDWCNDHYLQVKGLRKAREVRSQLLDILKQLKIELRSCGPDWDIVRKAICSAYFHNSARLKGVGEYVNCRTGMPCHLHPSSALYGLGYTPDYVVYHELILTTKEYMQCATSVEPHWLAELGPMFFSVKDSDTSMLEHKKKQKEEKSGMEEEMEKLRRDQVESELRSKERERKKRAKQQQQISGPGLKKGTTFLRPKKLGL</sequence>
<organism>
    <name type="scientific">Arabidopsis thaliana</name>
    <name type="common">Mouse-ear cress</name>
    <dbReference type="NCBI Taxonomy" id="3702"/>
    <lineage>
        <taxon>Eukaryota</taxon>
        <taxon>Viridiplantae</taxon>
        <taxon>Streptophyta</taxon>
        <taxon>Embryophyta</taxon>
        <taxon>Tracheophyta</taxon>
        <taxon>Spermatophyta</taxon>
        <taxon>Magnoliopsida</taxon>
        <taxon>eudicotyledons</taxon>
        <taxon>Gunneridae</taxon>
        <taxon>Pentapetalae</taxon>
        <taxon>rosids</taxon>
        <taxon>malvids</taxon>
        <taxon>Brassicales</taxon>
        <taxon>Brassicaceae</taxon>
        <taxon>Camelineae</taxon>
        <taxon>Arabidopsis</taxon>
    </lineage>
</organism>
<accession>F4K2E9</accession>
<accession>Q9LXT8</accession>